<gene>
    <name evidence="1" type="primary">uppP</name>
    <name type="ordered locus">Nwi_0165</name>
</gene>
<organism>
    <name type="scientific">Nitrobacter winogradskyi (strain ATCC 25391 / DSM 10237 / CIP 104748 / NCIMB 11846 / Nb-255)</name>
    <dbReference type="NCBI Taxonomy" id="323098"/>
    <lineage>
        <taxon>Bacteria</taxon>
        <taxon>Pseudomonadati</taxon>
        <taxon>Pseudomonadota</taxon>
        <taxon>Alphaproteobacteria</taxon>
        <taxon>Hyphomicrobiales</taxon>
        <taxon>Nitrobacteraceae</taxon>
        <taxon>Nitrobacter</taxon>
    </lineage>
</organism>
<evidence type="ECO:0000255" key="1">
    <source>
        <dbReference type="HAMAP-Rule" id="MF_01006"/>
    </source>
</evidence>
<dbReference type="EC" id="3.6.1.27" evidence="1"/>
<dbReference type="EMBL" id="CP000115">
    <property type="protein sequence ID" value="ABA03433.1"/>
    <property type="molecule type" value="Genomic_DNA"/>
</dbReference>
<dbReference type="RefSeq" id="WP_011313502.1">
    <property type="nucleotide sequence ID" value="NC_007406.1"/>
</dbReference>
<dbReference type="SMR" id="Q3SWA8"/>
<dbReference type="STRING" id="323098.Nwi_0165"/>
<dbReference type="KEGG" id="nwi:Nwi_0165"/>
<dbReference type="eggNOG" id="COG1968">
    <property type="taxonomic scope" value="Bacteria"/>
</dbReference>
<dbReference type="HOGENOM" id="CLU_060296_2_0_5"/>
<dbReference type="OrthoDB" id="9808289at2"/>
<dbReference type="Proteomes" id="UP000002531">
    <property type="component" value="Chromosome"/>
</dbReference>
<dbReference type="GO" id="GO:0005886">
    <property type="term" value="C:plasma membrane"/>
    <property type="evidence" value="ECO:0007669"/>
    <property type="project" value="UniProtKB-SubCell"/>
</dbReference>
<dbReference type="GO" id="GO:0050380">
    <property type="term" value="F:undecaprenyl-diphosphatase activity"/>
    <property type="evidence" value="ECO:0007669"/>
    <property type="project" value="UniProtKB-UniRule"/>
</dbReference>
<dbReference type="GO" id="GO:0071555">
    <property type="term" value="P:cell wall organization"/>
    <property type="evidence" value="ECO:0007669"/>
    <property type="project" value="UniProtKB-KW"/>
</dbReference>
<dbReference type="GO" id="GO:0009252">
    <property type="term" value="P:peptidoglycan biosynthetic process"/>
    <property type="evidence" value="ECO:0007669"/>
    <property type="project" value="UniProtKB-KW"/>
</dbReference>
<dbReference type="GO" id="GO:0008360">
    <property type="term" value="P:regulation of cell shape"/>
    <property type="evidence" value="ECO:0007669"/>
    <property type="project" value="UniProtKB-KW"/>
</dbReference>
<dbReference type="GO" id="GO:0046677">
    <property type="term" value="P:response to antibiotic"/>
    <property type="evidence" value="ECO:0007669"/>
    <property type="project" value="UniProtKB-UniRule"/>
</dbReference>
<dbReference type="HAMAP" id="MF_01006">
    <property type="entry name" value="Undec_diphosphatase"/>
    <property type="match status" value="1"/>
</dbReference>
<dbReference type="InterPro" id="IPR003824">
    <property type="entry name" value="UppP"/>
</dbReference>
<dbReference type="NCBIfam" id="NF001389">
    <property type="entry name" value="PRK00281.1-2"/>
    <property type="match status" value="1"/>
</dbReference>
<dbReference type="NCBIfam" id="NF001390">
    <property type="entry name" value="PRK00281.1-4"/>
    <property type="match status" value="1"/>
</dbReference>
<dbReference type="NCBIfam" id="TIGR00753">
    <property type="entry name" value="undec_PP_bacA"/>
    <property type="match status" value="1"/>
</dbReference>
<dbReference type="PANTHER" id="PTHR30622">
    <property type="entry name" value="UNDECAPRENYL-DIPHOSPHATASE"/>
    <property type="match status" value="1"/>
</dbReference>
<dbReference type="PANTHER" id="PTHR30622:SF3">
    <property type="entry name" value="UNDECAPRENYL-DIPHOSPHATASE"/>
    <property type="match status" value="1"/>
</dbReference>
<dbReference type="Pfam" id="PF02673">
    <property type="entry name" value="BacA"/>
    <property type="match status" value="1"/>
</dbReference>
<sequence>MISDAIRAVILGIIEGVTEFLPVSSTGHLLLAERFFDLGSGNFWDTFTVLIQPGAILAIVVIYFAKLWRVALGMFSNPADRRFVIGVLAAFLPAVIVGLIAGKYIKELLFNPWVVCFSLIVGGAVLMWVDQLDHRPREHDATAFPLPMYVWIGIAQCVAMIPGVSRSGATIVSAMLLGADKRAAAEFSFFLAIPTMTGAFAYDFYKNHADMTTDDLGTVAIGFVVSFVTAIIVVKAFLSYVTRNGFTFFAWWRVIVGTLGLIALALGR</sequence>
<reference key="1">
    <citation type="journal article" date="2006" name="Appl. Environ. Microbiol.">
        <title>Genome sequence of the chemolithoautotrophic nitrite-oxidizing bacterium Nitrobacter winogradskyi Nb-255.</title>
        <authorList>
            <person name="Starkenburg S.R."/>
            <person name="Chain P.S.G."/>
            <person name="Sayavedra-Soto L.A."/>
            <person name="Hauser L."/>
            <person name="Land M.L."/>
            <person name="Larimer F.W."/>
            <person name="Malfatti S.A."/>
            <person name="Klotz M.G."/>
            <person name="Bottomley P.J."/>
            <person name="Arp D.J."/>
            <person name="Hickey W.J."/>
        </authorList>
    </citation>
    <scope>NUCLEOTIDE SEQUENCE [LARGE SCALE GENOMIC DNA]</scope>
    <source>
        <strain>ATCC 25391 / DSM 10237 / CIP 104748 / NCIMB 11846 / Nb-255</strain>
    </source>
</reference>
<name>UPPP_NITWN</name>
<comment type="function">
    <text evidence="1">Catalyzes the dephosphorylation of undecaprenyl diphosphate (UPP). Confers resistance to bacitracin.</text>
</comment>
<comment type="catalytic activity">
    <reaction evidence="1">
        <text>di-trans,octa-cis-undecaprenyl diphosphate + H2O = di-trans,octa-cis-undecaprenyl phosphate + phosphate + H(+)</text>
        <dbReference type="Rhea" id="RHEA:28094"/>
        <dbReference type="ChEBI" id="CHEBI:15377"/>
        <dbReference type="ChEBI" id="CHEBI:15378"/>
        <dbReference type="ChEBI" id="CHEBI:43474"/>
        <dbReference type="ChEBI" id="CHEBI:58405"/>
        <dbReference type="ChEBI" id="CHEBI:60392"/>
        <dbReference type="EC" id="3.6.1.27"/>
    </reaction>
</comment>
<comment type="subcellular location">
    <subcellularLocation>
        <location evidence="1">Cell inner membrane</location>
        <topology evidence="1">Multi-pass membrane protein</topology>
    </subcellularLocation>
</comment>
<comment type="miscellaneous">
    <text>Bacitracin is thought to be involved in the inhibition of peptidoglycan synthesis by sequestering undecaprenyl diphosphate, thereby reducing the pool of lipid carrier available.</text>
</comment>
<comment type="similarity">
    <text evidence="1">Belongs to the UppP family.</text>
</comment>
<feature type="chain" id="PRO_0000227621" description="Undecaprenyl-diphosphatase">
    <location>
        <begin position="1"/>
        <end position="268"/>
    </location>
</feature>
<feature type="transmembrane region" description="Helical" evidence="1">
    <location>
        <begin position="47"/>
        <end position="67"/>
    </location>
</feature>
<feature type="transmembrane region" description="Helical" evidence="1">
    <location>
        <begin position="83"/>
        <end position="103"/>
    </location>
</feature>
<feature type="transmembrane region" description="Helical" evidence="1">
    <location>
        <begin position="109"/>
        <end position="129"/>
    </location>
</feature>
<feature type="transmembrane region" description="Helical" evidence="1">
    <location>
        <begin position="144"/>
        <end position="164"/>
    </location>
</feature>
<feature type="transmembrane region" description="Helical" evidence="1">
    <location>
        <begin position="184"/>
        <end position="204"/>
    </location>
</feature>
<feature type="transmembrane region" description="Helical" evidence="1">
    <location>
        <begin position="218"/>
        <end position="238"/>
    </location>
</feature>
<feature type="transmembrane region" description="Helical" evidence="1">
    <location>
        <begin position="246"/>
        <end position="266"/>
    </location>
</feature>
<proteinExistence type="inferred from homology"/>
<protein>
    <recommendedName>
        <fullName evidence="1">Undecaprenyl-diphosphatase</fullName>
        <ecNumber evidence="1">3.6.1.27</ecNumber>
    </recommendedName>
    <alternativeName>
        <fullName evidence="1">Bacitracin resistance protein</fullName>
    </alternativeName>
    <alternativeName>
        <fullName evidence="1">Undecaprenyl pyrophosphate phosphatase</fullName>
    </alternativeName>
</protein>
<accession>Q3SWA8</accession>
<keyword id="KW-0046">Antibiotic resistance</keyword>
<keyword id="KW-0997">Cell inner membrane</keyword>
<keyword id="KW-1003">Cell membrane</keyword>
<keyword id="KW-0133">Cell shape</keyword>
<keyword id="KW-0961">Cell wall biogenesis/degradation</keyword>
<keyword id="KW-0378">Hydrolase</keyword>
<keyword id="KW-0472">Membrane</keyword>
<keyword id="KW-0573">Peptidoglycan synthesis</keyword>
<keyword id="KW-1185">Reference proteome</keyword>
<keyword id="KW-0812">Transmembrane</keyword>
<keyword id="KW-1133">Transmembrane helix</keyword>